<reference key="1">
    <citation type="journal article" date="2002" name="Nature">
        <title>Complete genome sequence of the model actinomycete Streptomyces coelicolor A3(2).</title>
        <authorList>
            <person name="Bentley S.D."/>
            <person name="Chater K.F."/>
            <person name="Cerdeno-Tarraga A.-M."/>
            <person name="Challis G.L."/>
            <person name="Thomson N.R."/>
            <person name="James K.D."/>
            <person name="Harris D.E."/>
            <person name="Quail M.A."/>
            <person name="Kieser H."/>
            <person name="Harper D."/>
            <person name="Bateman A."/>
            <person name="Brown S."/>
            <person name="Chandra G."/>
            <person name="Chen C.W."/>
            <person name="Collins M."/>
            <person name="Cronin A."/>
            <person name="Fraser A."/>
            <person name="Goble A."/>
            <person name="Hidalgo J."/>
            <person name="Hornsby T."/>
            <person name="Howarth S."/>
            <person name="Huang C.-H."/>
            <person name="Kieser T."/>
            <person name="Larke L."/>
            <person name="Murphy L.D."/>
            <person name="Oliver K."/>
            <person name="O'Neil S."/>
            <person name="Rabbinowitsch E."/>
            <person name="Rajandream M.A."/>
            <person name="Rutherford K.M."/>
            <person name="Rutter S."/>
            <person name="Seeger K."/>
            <person name="Saunders D."/>
            <person name="Sharp S."/>
            <person name="Squares R."/>
            <person name="Squares S."/>
            <person name="Taylor K."/>
            <person name="Warren T."/>
            <person name="Wietzorrek A."/>
            <person name="Woodward J.R."/>
            <person name="Barrell B.G."/>
            <person name="Parkhill J."/>
            <person name="Hopwood D.A."/>
        </authorList>
    </citation>
    <scope>NUCLEOTIDE SEQUENCE [LARGE SCALE GENOMIC DNA]</scope>
    <source>
        <strain>ATCC BAA-471 / A3(2) / M145</strain>
    </source>
</reference>
<reference key="2">
    <citation type="journal article" date="2015" name="Phys. Chem. Chem. Phys.">
        <title>Reversibility and two state behaviour in the thermal unfolding of oligomeric TIM barrel proteins.</title>
        <authorList>
            <person name="Romero-Romero S."/>
            <person name="Costas M."/>
            <person name="Rodriguez-Romero A."/>
            <person name="Alejandro Fernandez-Velasco D."/>
        </authorList>
    </citation>
    <scope>X-RAY CRYSTALLOGRAPHY (2.10 ANGSTROMS)</scope>
    <scope>FUNCTION</scope>
    <scope>CATALYTIC ACTIVITY</scope>
    <scope>BIOPHYSICOCHEMICAL PROPERTIES</scope>
    <scope>SUBUNIT</scope>
    <source>
        <strain>13 / Type A</strain>
    </source>
</reference>
<dbReference type="EC" id="5.3.1.1" evidence="1 2"/>
<dbReference type="EMBL" id="AL939110">
    <property type="protein sequence ID" value="CAB38135.1"/>
    <property type="molecule type" value="Genomic_DNA"/>
</dbReference>
<dbReference type="PIR" id="T36018">
    <property type="entry name" value="T36018"/>
</dbReference>
<dbReference type="RefSeq" id="NP_626209.1">
    <property type="nucleotide sequence ID" value="NC_003888.3"/>
</dbReference>
<dbReference type="RefSeq" id="WP_003976873.1">
    <property type="nucleotide sequence ID" value="NZ_VNID01000001.1"/>
</dbReference>
<dbReference type="PDB" id="4Y9A">
    <property type="method" value="X-ray"/>
    <property type="resolution" value="2.29 A"/>
    <property type="chains" value="A/B/C/D=1-258"/>
</dbReference>
<dbReference type="PDBsum" id="4Y9A"/>
<dbReference type="SMR" id="Q9Z520"/>
<dbReference type="FunCoup" id="Q9Z520">
    <property type="interactions" value="461"/>
</dbReference>
<dbReference type="STRING" id="100226.gene:17759542"/>
<dbReference type="PaxDb" id="100226-SCO1945"/>
<dbReference type="GeneID" id="91387062"/>
<dbReference type="KEGG" id="sco:SCO1945"/>
<dbReference type="PATRIC" id="fig|100226.15.peg.1972"/>
<dbReference type="eggNOG" id="COG0149">
    <property type="taxonomic scope" value="Bacteria"/>
</dbReference>
<dbReference type="HOGENOM" id="CLU_024251_2_3_11"/>
<dbReference type="InParanoid" id="Q9Z520"/>
<dbReference type="OrthoDB" id="9809429at2"/>
<dbReference type="PhylomeDB" id="Q9Z520"/>
<dbReference type="SABIO-RK" id="Q9Z520"/>
<dbReference type="UniPathway" id="UPA00109">
    <property type="reaction ID" value="UER00189"/>
</dbReference>
<dbReference type="UniPathway" id="UPA00138"/>
<dbReference type="EvolutionaryTrace" id="Q9Z520"/>
<dbReference type="Proteomes" id="UP000001973">
    <property type="component" value="Chromosome"/>
</dbReference>
<dbReference type="GO" id="GO:0005829">
    <property type="term" value="C:cytosol"/>
    <property type="evidence" value="ECO:0000318"/>
    <property type="project" value="GO_Central"/>
</dbReference>
<dbReference type="GO" id="GO:0004807">
    <property type="term" value="F:triose-phosphate isomerase activity"/>
    <property type="evidence" value="ECO:0000318"/>
    <property type="project" value="GO_Central"/>
</dbReference>
<dbReference type="GO" id="GO:0006094">
    <property type="term" value="P:gluconeogenesis"/>
    <property type="evidence" value="ECO:0000318"/>
    <property type="project" value="GO_Central"/>
</dbReference>
<dbReference type="GO" id="GO:0046166">
    <property type="term" value="P:glyceraldehyde-3-phosphate biosynthetic process"/>
    <property type="evidence" value="ECO:0000318"/>
    <property type="project" value="GO_Central"/>
</dbReference>
<dbReference type="GO" id="GO:0019563">
    <property type="term" value="P:glycerol catabolic process"/>
    <property type="evidence" value="ECO:0000318"/>
    <property type="project" value="GO_Central"/>
</dbReference>
<dbReference type="GO" id="GO:0006096">
    <property type="term" value="P:glycolytic process"/>
    <property type="evidence" value="ECO:0000318"/>
    <property type="project" value="GO_Central"/>
</dbReference>
<dbReference type="CDD" id="cd00311">
    <property type="entry name" value="TIM"/>
    <property type="match status" value="1"/>
</dbReference>
<dbReference type="FunFam" id="3.20.20.70:FF:000020">
    <property type="entry name" value="Triosephosphate isomerase"/>
    <property type="match status" value="1"/>
</dbReference>
<dbReference type="Gene3D" id="3.20.20.70">
    <property type="entry name" value="Aldolase class I"/>
    <property type="match status" value="1"/>
</dbReference>
<dbReference type="HAMAP" id="MF_00147_B">
    <property type="entry name" value="TIM_B"/>
    <property type="match status" value="1"/>
</dbReference>
<dbReference type="InterPro" id="IPR013785">
    <property type="entry name" value="Aldolase_TIM"/>
</dbReference>
<dbReference type="InterPro" id="IPR035990">
    <property type="entry name" value="TIM_sf"/>
</dbReference>
<dbReference type="InterPro" id="IPR022896">
    <property type="entry name" value="TrioseP_Isoase_bac/euk"/>
</dbReference>
<dbReference type="InterPro" id="IPR000652">
    <property type="entry name" value="Triosephosphate_isomerase"/>
</dbReference>
<dbReference type="InterPro" id="IPR020861">
    <property type="entry name" value="Triosephosphate_isomerase_AS"/>
</dbReference>
<dbReference type="NCBIfam" id="TIGR00419">
    <property type="entry name" value="tim"/>
    <property type="match status" value="1"/>
</dbReference>
<dbReference type="PANTHER" id="PTHR21139">
    <property type="entry name" value="TRIOSEPHOSPHATE ISOMERASE"/>
    <property type="match status" value="1"/>
</dbReference>
<dbReference type="PANTHER" id="PTHR21139:SF42">
    <property type="entry name" value="TRIOSEPHOSPHATE ISOMERASE"/>
    <property type="match status" value="1"/>
</dbReference>
<dbReference type="Pfam" id="PF00121">
    <property type="entry name" value="TIM"/>
    <property type="match status" value="1"/>
</dbReference>
<dbReference type="SUPFAM" id="SSF51351">
    <property type="entry name" value="Triosephosphate isomerase (TIM)"/>
    <property type="match status" value="1"/>
</dbReference>
<dbReference type="PROSITE" id="PS00171">
    <property type="entry name" value="TIM_1"/>
    <property type="match status" value="1"/>
</dbReference>
<dbReference type="PROSITE" id="PS51440">
    <property type="entry name" value="TIM_2"/>
    <property type="match status" value="1"/>
</dbReference>
<protein>
    <recommendedName>
        <fullName evidence="1 3">Triosephosphate isomerase</fullName>
        <shortName evidence="1 3">TIM</shortName>
        <shortName evidence="1">TPI</shortName>
        <ecNumber evidence="1 2">5.3.1.1</ecNumber>
    </recommendedName>
    <alternativeName>
        <fullName evidence="1">Triose-phosphate isomerase</fullName>
    </alternativeName>
</protein>
<comment type="function">
    <text evidence="1 2">Involved in the gluconeogenesis. Catalyzes stereospecifically the conversion of dihydroxyacetone phosphate (DHAP) to D-glyceraldehyde-3-phosphate (G3P).</text>
</comment>
<comment type="catalytic activity">
    <reaction evidence="1 2">
        <text>D-glyceraldehyde 3-phosphate = dihydroxyacetone phosphate</text>
        <dbReference type="Rhea" id="RHEA:18585"/>
        <dbReference type="ChEBI" id="CHEBI:57642"/>
        <dbReference type="ChEBI" id="CHEBI:59776"/>
        <dbReference type="EC" id="5.3.1.1"/>
    </reaction>
</comment>
<comment type="biophysicochemical properties">
    <kinetics>
        <KM evidence="2">0.74 mM for G3P</KM>
        <text evidence="2">kcat is 5668 sec(-1) for isomerase activity.</text>
    </kinetics>
</comment>
<comment type="pathway">
    <text evidence="1">Carbohydrate biosynthesis; gluconeogenesis.</text>
</comment>
<comment type="pathway">
    <text evidence="1">Carbohydrate degradation; glycolysis; D-glyceraldehyde 3-phosphate from glycerone phosphate: step 1/1.</text>
</comment>
<comment type="subunit">
    <text evidence="1 2">Homodimer.</text>
</comment>
<comment type="subcellular location">
    <subcellularLocation>
        <location evidence="1">Cytoplasm</location>
    </subcellularLocation>
</comment>
<comment type="similarity">
    <text evidence="1">Belongs to the triosephosphate isomerase family.</text>
</comment>
<organism>
    <name type="scientific">Streptomyces coelicolor (strain ATCC BAA-471 / A3(2) / M145)</name>
    <dbReference type="NCBI Taxonomy" id="100226"/>
    <lineage>
        <taxon>Bacteria</taxon>
        <taxon>Bacillati</taxon>
        <taxon>Actinomycetota</taxon>
        <taxon>Actinomycetes</taxon>
        <taxon>Kitasatosporales</taxon>
        <taxon>Streptomycetaceae</taxon>
        <taxon>Streptomyces</taxon>
        <taxon>Streptomyces albidoflavus group</taxon>
    </lineage>
</organism>
<accession>Q9Z520</accession>
<name>TPIS_STRCO</name>
<sequence>MTTRTPLMAGNWKMNLNHLEAIAHVQKLAFALADKDYDAVEVAVLAPFTDLRSVQTLVDGDKLKIKYGAQDISAHDGGAYTGEISGPMLAKLKCTYVAVGHSERRQYHAETDEIVNAKVKAAYKHGLTPILCVGEELDVREAGNHVEHTLAQVEGGLKDLAAEQAESVVIAYEPVWAIGTGKVCGADDAQEVCAAIRGKLAELYSQELADKVRIQYGGSVKSGNVAEIMAKPDIDGALVGGASLDSDEFVKIVRFRDQ</sequence>
<keyword id="KW-0002">3D-structure</keyword>
<keyword id="KW-0963">Cytoplasm</keyword>
<keyword id="KW-0312">Gluconeogenesis</keyword>
<keyword id="KW-0324">Glycolysis</keyword>
<keyword id="KW-0413">Isomerase</keyword>
<keyword id="KW-1185">Reference proteome</keyword>
<gene>
    <name evidence="1" type="primary">tpiA</name>
    <name type="synonym">tpi</name>
    <name type="ordered locus">SCO1945</name>
    <name type="ORF">SCC54.05c</name>
</gene>
<proteinExistence type="evidence at protein level"/>
<feature type="chain" id="PRO_0000090295" description="Triosephosphate isomerase">
    <location>
        <begin position="1"/>
        <end position="258"/>
    </location>
</feature>
<feature type="active site" description="Electrophile" evidence="1">
    <location>
        <position position="101"/>
    </location>
</feature>
<feature type="active site" description="Proton acceptor" evidence="1">
    <location>
        <position position="173"/>
    </location>
</feature>
<feature type="binding site" evidence="1">
    <location>
        <begin position="11"/>
        <end position="13"/>
    </location>
    <ligand>
        <name>substrate</name>
    </ligand>
</feature>
<feature type="binding site" evidence="1">
    <location>
        <position position="179"/>
    </location>
    <ligand>
        <name>substrate</name>
    </ligand>
</feature>
<feature type="binding site" evidence="1">
    <location>
        <position position="219"/>
    </location>
    <ligand>
        <name>substrate</name>
    </ligand>
</feature>
<feature type="binding site" evidence="1">
    <location>
        <begin position="240"/>
        <end position="241"/>
    </location>
    <ligand>
        <name>substrate</name>
    </ligand>
</feature>
<feature type="strand" evidence="4">
    <location>
        <begin position="7"/>
        <end position="11"/>
    </location>
</feature>
<feature type="helix" evidence="4">
    <location>
        <begin position="18"/>
        <end position="31"/>
    </location>
</feature>
<feature type="helix" evidence="4">
    <location>
        <begin position="34"/>
        <end position="39"/>
    </location>
</feature>
<feature type="strand" evidence="4">
    <location>
        <begin position="40"/>
        <end position="45"/>
    </location>
</feature>
<feature type="helix" evidence="4">
    <location>
        <begin position="48"/>
        <end position="50"/>
    </location>
</feature>
<feature type="helix" evidence="4">
    <location>
        <begin position="51"/>
        <end position="60"/>
    </location>
</feature>
<feature type="strand" evidence="4">
    <location>
        <begin position="66"/>
        <end position="70"/>
    </location>
</feature>
<feature type="strand" evidence="4">
    <location>
        <begin position="74"/>
        <end position="79"/>
    </location>
</feature>
<feature type="helix" evidence="4">
    <location>
        <begin position="86"/>
        <end position="91"/>
    </location>
</feature>
<feature type="strand" evidence="4">
    <location>
        <begin position="96"/>
        <end position="100"/>
    </location>
</feature>
<feature type="helix" evidence="4">
    <location>
        <begin position="102"/>
        <end position="107"/>
    </location>
</feature>
<feature type="helix" evidence="4">
    <location>
        <begin position="112"/>
        <end position="124"/>
    </location>
</feature>
<feature type="strand" evidence="4">
    <location>
        <begin position="128"/>
        <end position="133"/>
    </location>
</feature>
<feature type="helix" evidence="4">
    <location>
        <begin position="137"/>
        <end position="141"/>
    </location>
</feature>
<feature type="helix" evidence="4">
    <location>
        <begin position="145"/>
        <end position="156"/>
    </location>
</feature>
<feature type="turn" evidence="4">
    <location>
        <begin position="157"/>
        <end position="159"/>
    </location>
</feature>
<feature type="helix" evidence="4">
    <location>
        <begin position="162"/>
        <end position="165"/>
    </location>
</feature>
<feature type="strand" evidence="4">
    <location>
        <begin position="169"/>
        <end position="172"/>
    </location>
</feature>
<feature type="helix" evidence="4">
    <location>
        <begin position="175"/>
        <end position="177"/>
    </location>
</feature>
<feature type="strand" evidence="4">
    <location>
        <begin position="178"/>
        <end position="181"/>
    </location>
</feature>
<feature type="helix" evidence="4">
    <location>
        <begin position="186"/>
        <end position="203"/>
    </location>
</feature>
<feature type="helix" evidence="4">
    <location>
        <begin position="206"/>
        <end position="209"/>
    </location>
</feature>
<feature type="strand" evidence="4">
    <location>
        <begin position="212"/>
        <end position="216"/>
    </location>
</feature>
<feature type="turn" evidence="4">
    <location>
        <begin position="222"/>
        <end position="224"/>
    </location>
</feature>
<feature type="helix" evidence="4">
    <location>
        <begin position="225"/>
        <end position="229"/>
    </location>
</feature>
<feature type="strand" evidence="4">
    <location>
        <begin position="236"/>
        <end position="239"/>
    </location>
</feature>
<feature type="helix" evidence="4">
    <location>
        <begin position="241"/>
        <end position="244"/>
    </location>
</feature>
<feature type="helix" evidence="4">
    <location>
        <begin position="246"/>
        <end position="253"/>
    </location>
</feature>
<feature type="turn" evidence="4">
    <location>
        <begin position="254"/>
        <end position="256"/>
    </location>
</feature>
<evidence type="ECO:0000255" key="1">
    <source>
        <dbReference type="HAMAP-Rule" id="MF_00147"/>
    </source>
</evidence>
<evidence type="ECO:0000269" key="2">
    <source>
    </source>
</evidence>
<evidence type="ECO:0000303" key="3">
    <source>
    </source>
</evidence>
<evidence type="ECO:0007829" key="4">
    <source>
        <dbReference type="PDB" id="4Y9A"/>
    </source>
</evidence>